<feature type="chain" id="PRO_1000010410" description="Heat-inducible transcription repressor HrcA">
    <location>
        <begin position="1"/>
        <end position="356"/>
    </location>
</feature>
<evidence type="ECO:0000255" key="1">
    <source>
        <dbReference type="HAMAP-Rule" id="MF_00081"/>
    </source>
</evidence>
<sequence length="356" mass="38318">MMRPQPPLFRPSIPMPHGLGDREAAILREIVEEYVETGEPIGSQTLAQRLQPSLSPATIRNVMAELARAGLLFSPHVSAGRLPTEKGVRLFVDGLLQFSSLTEEDRASIDSRLDIHGRSYQDILSEASSLLSGLSSAAGLVLAPKSDATLKHIEFVALGPGRVLVILVGSDGQVENRIIETPPGVPPSALVEAGNYLNSRLGDLTLGNLRERVRAEMDASRHELDALTASVIESGLATWDADGGTLFVKGQGKLLADITEIERLTTIRMLFDHLETQETMLQLLQLADASEGVRIYIGRESGMFGMSGVSMIVAPARNEAQKIVGAIGVIGPTRLNYGRIVPVVDYTARMVGRLLG</sequence>
<gene>
    <name evidence="1" type="primary">hrcA</name>
    <name type="ordered locus">GOX1283</name>
</gene>
<proteinExistence type="inferred from homology"/>
<keyword id="KW-1185">Reference proteome</keyword>
<keyword id="KW-0678">Repressor</keyword>
<keyword id="KW-0346">Stress response</keyword>
<keyword id="KW-0804">Transcription</keyword>
<keyword id="KW-0805">Transcription regulation</keyword>
<reference key="1">
    <citation type="journal article" date="2005" name="Nat. Biotechnol.">
        <title>Complete genome sequence of the acetic acid bacterium Gluconobacter oxydans.</title>
        <authorList>
            <person name="Prust C."/>
            <person name="Hoffmeister M."/>
            <person name="Liesegang H."/>
            <person name="Wiezer A."/>
            <person name="Fricke W.F."/>
            <person name="Ehrenreich A."/>
            <person name="Gottschalk G."/>
            <person name="Deppenmeier U."/>
        </authorList>
    </citation>
    <scope>NUCLEOTIDE SEQUENCE [LARGE SCALE GENOMIC DNA]</scope>
    <source>
        <strain>621H</strain>
    </source>
</reference>
<accession>Q5FRF2</accession>
<dbReference type="EMBL" id="CP000009">
    <property type="protein sequence ID" value="AAW61044.1"/>
    <property type="molecule type" value="Genomic_DNA"/>
</dbReference>
<dbReference type="RefSeq" id="WP_011252836.1">
    <property type="nucleotide sequence ID" value="NC_006677.1"/>
</dbReference>
<dbReference type="SMR" id="Q5FRF2"/>
<dbReference type="STRING" id="290633.GOX1283"/>
<dbReference type="KEGG" id="gox:GOX1283"/>
<dbReference type="eggNOG" id="COG1420">
    <property type="taxonomic scope" value="Bacteria"/>
</dbReference>
<dbReference type="HOGENOM" id="CLU_050019_0_0_5"/>
<dbReference type="Proteomes" id="UP000006375">
    <property type="component" value="Chromosome"/>
</dbReference>
<dbReference type="GO" id="GO:0003677">
    <property type="term" value="F:DNA binding"/>
    <property type="evidence" value="ECO:0007669"/>
    <property type="project" value="InterPro"/>
</dbReference>
<dbReference type="GO" id="GO:0045892">
    <property type="term" value="P:negative regulation of DNA-templated transcription"/>
    <property type="evidence" value="ECO:0007669"/>
    <property type="project" value="UniProtKB-UniRule"/>
</dbReference>
<dbReference type="Gene3D" id="3.30.450.40">
    <property type="match status" value="1"/>
</dbReference>
<dbReference type="Gene3D" id="3.30.390.60">
    <property type="entry name" value="Heat-inducible transcription repressor hrca homolog, domain 3"/>
    <property type="match status" value="1"/>
</dbReference>
<dbReference type="Gene3D" id="1.10.10.10">
    <property type="entry name" value="Winged helix-like DNA-binding domain superfamily/Winged helix DNA-binding domain"/>
    <property type="match status" value="1"/>
</dbReference>
<dbReference type="HAMAP" id="MF_00081">
    <property type="entry name" value="HrcA"/>
    <property type="match status" value="1"/>
</dbReference>
<dbReference type="InterPro" id="IPR029016">
    <property type="entry name" value="GAF-like_dom_sf"/>
</dbReference>
<dbReference type="InterPro" id="IPR002571">
    <property type="entry name" value="HrcA"/>
</dbReference>
<dbReference type="InterPro" id="IPR021153">
    <property type="entry name" value="HrcA_C"/>
</dbReference>
<dbReference type="InterPro" id="IPR036388">
    <property type="entry name" value="WH-like_DNA-bd_sf"/>
</dbReference>
<dbReference type="InterPro" id="IPR036390">
    <property type="entry name" value="WH_DNA-bd_sf"/>
</dbReference>
<dbReference type="InterPro" id="IPR023120">
    <property type="entry name" value="WHTH_transcript_rep_HrcA_IDD"/>
</dbReference>
<dbReference type="NCBIfam" id="TIGR00331">
    <property type="entry name" value="hrcA"/>
    <property type="match status" value="1"/>
</dbReference>
<dbReference type="PANTHER" id="PTHR34824">
    <property type="entry name" value="HEAT-INDUCIBLE TRANSCRIPTION REPRESSOR HRCA"/>
    <property type="match status" value="1"/>
</dbReference>
<dbReference type="PANTHER" id="PTHR34824:SF1">
    <property type="entry name" value="HEAT-INDUCIBLE TRANSCRIPTION REPRESSOR HRCA"/>
    <property type="match status" value="1"/>
</dbReference>
<dbReference type="Pfam" id="PF01628">
    <property type="entry name" value="HrcA"/>
    <property type="match status" value="1"/>
</dbReference>
<dbReference type="PIRSF" id="PIRSF005485">
    <property type="entry name" value="HrcA"/>
    <property type="match status" value="1"/>
</dbReference>
<dbReference type="SUPFAM" id="SSF55781">
    <property type="entry name" value="GAF domain-like"/>
    <property type="match status" value="1"/>
</dbReference>
<dbReference type="SUPFAM" id="SSF46785">
    <property type="entry name" value="Winged helix' DNA-binding domain"/>
    <property type="match status" value="1"/>
</dbReference>
<comment type="function">
    <text evidence="1">Negative regulator of class I heat shock genes (grpE-dnaK-dnaJ and groELS operons). Prevents heat-shock induction of these operons.</text>
</comment>
<comment type="similarity">
    <text evidence="1">Belongs to the HrcA family.</text>
</comment>
<name>HRCA_GLUOX</name>
<organism>
    <name type="scientific">Gluconobacter oxydans (strain 621H)</name>
    <name type="common">Gluconobacter suboxydans</name>
    <dbReference type="NCBI Taxonomy" id="290633"/>
    <lineage>
        <taxon>Bacteria</taxon>
        <taxon>Pseudomonadati</taxon>
        <taxon>Pseudomonadota</taxon>
        <taxon>Alphaproteobacteria</taxon>
        <taxon>Acetobacterales</taxon>
        <taxon>Acetobacteraceae</taxon>
        <taxon>Gluconobacter</taxon>
    </lineage>
</organism>
<protein>
    <recommendedName>
        <fullName evidence="1">Heat-inducible transcription repressor HrcA</fullName>
    </recommendedName>
</protein>